<gene>
    <name evidence="1" type="primary">hfq</name>
    <name type="ordered locus">BTH_I2239</name>
</gene>
<evidence type="ECO:0000255" key="1">
    <source>
        <dbReference type="HAMAP-Rule" id="MF_00436"/>
    </source>
</evidence>
<evidence type="ECO:0000255" key="2">
    <source>
        <dbReference type="PROSITE-ProRule" id="PRU01346"/>
    </source>
</evidence>
<proteinExistence type="inferred from homology"/>
<reference key="1">
    <citation type="journal article" date="2005" name="BMC Genomics">
        <title>Bacterial genome adaptation to niches: divergence of the potential virulence genes in three Burkholderia species of different survival strategies.</title>
        <authorList>
            <person name="Kim H.S."/>
            <person name="Schell M.A."/>
            <person name="Yu Y."/>
            <person name="Ulrich R.L."/>
            <person name="Sarria S.H."/>
            <person name="Nierman W.C."/>
            <person name="DeShazer D."/>
        </authorList>
    </citation>
    <scope>NUCLEOTIDE SEQUENCE [LARGE SCALE GENOMIC DNA]</scope>
    <source>
        <strain>ATCC 700388 / DSM 13276 / CCUG 48851 / CIP 106301 / E264</strain>
    </source>
</reference>
<organism>
    <name type="scientific">Burkholderia thailandensis (strain ATCC 700388 / DSM 13276 / CCUG 48851 / CIP 106301 / E264)</name>
    <dbReference type="NCBI Taxonomy" id="271848"/>
    <lineage>
        <taxon>Bacteria</taxon>
        <taxon>Pseudomonadati</taxon>
        <taxon>Pseudomonadota</taxon>
        <taxon>Betaproteobacteria</taxon>
        <taxon>Burkholderiales</taxon>
        <taxon>Burkholderiaceae</taxon>
        <taxon>Burkholderia</taxon>
        <taxon>pseudomallei group</taxon>
    </lineage>
</organism>
<name>HFQ_BURTA</name>
<feature type="chain" id="PRO_0000265144" description="RNA-binding protein Hfq">
    <location>
        <begin position="1"/>
        <end position="79"/>
    </location>
</feature>
<feature type="domain" description="Sm" evidence="2">
    <location>
        <begin position="10"/>
        <end position="69"/>
    </location>
</feature>
<protein>
    <recommendedName>
        <fullName evidence="1">RNA-binding protein Hfq</fullName>
    </recommendedName>
</protein>
<comment type="function">
    <text evidence="1">RNA chaperone that binds small regulatory RNA (sRNAs) and mRNAs to facilitate mRNA translational regulation in response to envelope stress, environmental stress and changes in metabolite concentrations. Also binds with high specificity to tRNAs.</text>
</comment>
<comment type="subunit">
    <text evidence="1">Homohexamer.</text>
</comment>
<comment type="similarity">
    <text evidence="1">Belongs to the Hfq family.</text>
</comment>
<keyword id="KW-0694">RNA-binding</keyword>
<keyword id="KW-0346">Stress response</keyword>
<sequence>MSNKGQLLQDPFLNALRKEHVPVSIYLVNGIKLQGNIESFDQYVVLLRNTVTQMVYKHAISTVVPARPVNFHPDAEAAS</sequence>
<dbReference type="EMBL" id="CP000086">
    <property type="protein sequence ID" value="ABC37693.1"/>
    <property type="molecule type" value="Genomic_DNA"/>
</dbReference>
<dbReference type="RefSeq" id="WP_004192796.1">
    <property type="nucleotide sequence ID" value="NZ_CP008785.1"/>
</dbReference>
<dbReference type="SMR" id="Q2SWD9"/>
<dbReference type="GeneID" id="93060471"/>
<dbReference type="KEGG" id="bte:BTH_I2239"/>
<dbReference type="HOGENOM" id="CLU_113688_2_2_4"/>
<dbReference type="Proteomes" id="UP000001930">
    <property type="component" value="Chromosome I"/>
</dbReference>
<dbReference type="GO" id="GO:0005829">
    <property type="term" value="C:cytosol"/>
    <property type="evidence" value="ECO:0007669"/>
    <property type="project" value="TreeGrafter"/>
</dbReference>
<dbReference type="GO" id="GO:0003723">
    <property type="term" value="F:RNA binding"/>
    <property type="evidence" value="ECO:0007669"/>
    <property type="project" value="UniProtKB-UniRule"/>
</dbReference>
<dbReference type="GO" id="GO:0006355">
    <property type="term" value="P:regulation of DNA-templated transcription"/>
    <property type="evidence" value="ECO:0007669"/>
    <property type="project" value="InterPro"/>
</dbReference>
<dbReference type="GO" id="GO:0043487">
    <property type="term" value="P:regulation of RNA stability"/>
    <property type="evidence" value="ECO:0007669"/>
    <property type="project" value="TreeGrafter"/>
</dbReference>
<dbReference type="GO" id="GO:0045974">
    <property type="term" value="P:regulation of translation, ncRNA-mediated"/>
    <property type="evidence" value="ECO:0007669"/>
    <property type="project" value="TreeGrafter"/>
</dbReference>
<dbReference type="CDD" id="cd01716">
    <property type="entry name" value="Hfq"/>
    <property type="match status" value="1"/>
</dbReference>
<dbReference type="FunFam" id="2.30.30.100:FF:000001">
    <property type="entry name" value="RNA-binding protein Hfq"/>
    <property type="match status" value="1"/>
</dbReference>
<dbReference type="Gene3D" id="2.30.30.100">
    <property type="match status" value="1"/>
</dbReference>
<dbReference type="HAMAP" id="MF_00436">
    <property type="entry name" value="Hfq"/>
    <property type="match status" value="1"/>
</dbReference>
<dbReference type="InterPro" id="IPR005001">
    <property type="entry name" value="Hfq"/>
</dbReference>
<dbReference type="InterPro" id="IPR010920">
    <property type="entry name" value="LSM_dom_sf"/>
</dbReference>
<dbReference type="InterPro" id="IPR047575">
    <property type="entry name" value="Sm"/>
</dbReference>
<dbReference type="NCBIfam" id="TIGR02383">
    <property type="entry name" value="Hfq"/>
    <property type="match status" value="1"/>
</dbReference>
<dbReference type="NCBIfam" id="NF001602">
    <property type="entry name" value="PRK00395.1"/>
    <property type="match status" value="1"/>
</dbReference>
<dbReference type="PANTHER" id="PTHR34772">
    <property type="entry name" value="RNA-BINDING PROTEIN HFQ"/>
    <property type="match status" value="1"/>
</dbReference>
<dbReference type="PANTHER" id="PTHR34772:SF1">
    <property type="entry name" value="RNA-BINDING PROTEIN HFQ"/>
    <property type="match status" value="1"/>
</dbReference>
<dbReference type="Pfam" id="PF17209">
    <property type="entry name" value="Hfq"/>
    <property type="match status" value="1"/>
</dbReference>
<dbReference type="SUPFAM" id="SSF50182">
    <property type="entry name" value="Sm-like ribonucleoproteins"/>
    <property type="match status" value="1"/>
</dbReference>
<dbReference type="PROSITE" id="PS52002">
    <property type="entry name" value="SM"/>
    <property type="match status" value="1"/>
</dbReference>
<accession>Q2SWD9</accession>